<gene>
    <name evidence="1" type="primary">rpsF</name>
    <name type="ordered locus">USA300HOU_0387</name>
</gene>
<feature type="chain" id="PRO_1000079472" description="Small ribosomal subunit protein bS6">
    <location>
        <begin position="1"/>
        <end position="98"/>
    </location>
</feature>
<protein>
    <recommendedName>
        <fullName evidence="1">Small ribosomal subunit protein bS6</fullName>
    </recommendedName>
    <alternativeName>
        <fullName evidence="2">30S ribosomal protein S6</fullName>
    </alternativeName>
</protein>
<name>RS6_STAAT</name>
<sequence>MRTYEVMYIVRPNIEEDAKKALVERFNGILATEGAEVLEAKDWGKRRLAYEINDFKDGFYNIVRVKSDNNKATDEFQRLAKISDDIIRYMVIREDEDK</sequence>
<organism>
    <name type="scientific">Staphylococcus aureus (strain USA300 / TCH1516)</name>
    <dbReference type="NCBI Taxonomy" id="451516"/>
    <lineage>
        <taxon>Bacteria</taxon>
        <taxon>Bacillati</taxon>
        <taxon>Bacillota</taxon>
        <taxon>Bacilli</taxon>
        <taxon>Bacillales</taxon>
        <taxon>Staphylococcaceae</taxon>
        <taxon>Staphylococcus</taxon>
    </lineage>
</organism>
<dbReference type="EMBL" id="CP000730">
    <property type="protein sequence ID" value="ABX28417.1"/>
    <property type="molecule type" value="Genomic_DNA"/>
</dbReference>
<dbReference type="RefSeq" id="WP_001261460.1">
    <property type="nucleotide sequence ID" value="NC_010079.1"/>
</dbReference>
<dbReference type="SMR" id="A8YZJ1"/>
<dbReference type="GeneID" id="98344691"/>
<dbReference type="KEGG" id="sax:USA300HOU_0387"/>
<dbReference type="HOGENOM" id="CLU_113441_5_3_9"/>
<dbReference type="GO" id="GO:0005737">
    <property type="term" value="C:cytoplasm"/>
    <property type="evidence" value="ECO:0007669"/>
    <property type="project" value="UniProtKB-ARBA"/>
</dbReference>
<dbReference type="GO" id="GO:1990904">
    <property type="term" value="C:ribonucleoprotein complex"/>
    <property type="evidence" value="ECO:0007669"/>
    <property type="project" value="UniProtKB-KW"/>
</dbReference>
<dbReference type="GO" id="GO:0005840">
    <property type="term" value="C:ribosome"/>
    <property type="evidence" value="ECO:0007669"/>
    <property type="project" value="UniProtKB-KW"/>
</dbReference>
<dbReference type="GO" id="GO:0070181">
    <property type="term" value="F:small ribosomal subunit rRNA binding"/>
    <property type="evidence" value="ECO:0007669"/>
    <property type="project" value="TreeGrafter"/>
</dbReference>
<dbReference type="GO" id="GO:0003735">
    <property type="term" value="F:structural constituent of ribosome"/>
    <property type="evidence" value="ECO:0007669"/>
    <property type="project" value="InterPro"/>
</dbReference>
<dbReference type="GO" id="GO:0006412">
    <property type="term" value="P:translation"/>
    <property type="evidence" value="ECO:0007669"/>
    <property type="project" value="UniProtKB-UniRule"/>
</dbReference>
<dbReference type="CDD" id="cd00473">
    <property type="entry name" value="bS6"/>
    <property type="match status" value="1"/>
</dbReference>
<dbReference type="FunFam" id="3.30.70.60:FF:000002">
    <property type="entry name" value="30S ribosomal protein S6"/>
    <property type="match status" value="1"/>
</dbReference>
<dbReference type="Gene3D" id="3.30.70.60">
    <property type="match status" value="1"/>
</dbReference>
<dbReference type="HAMAP" id="MF_00360">
    <property type="entry name" value="Ribosomal_bS6"/>
    <property type="match status" value="1"/>
</dbReference>
<dbReference type="InterPro" id="IPR000529">
    <property type="entry name" value="Ribosomal_bS6"/>
</dbReference>
<dbReference type="InterPro" id="IPR020815">
    <property type="entry name" value="Ribosomal_bS6_CS"/>
</dbReference>
<dbReference type="InterPro" id="IPR035980">
    <property type="entry name" value="Ribosomal_bS6_sf"/>
</dbReference>
<dbReference type="InterPro" id="IPR020814">
    <property type="entry name" value="Ribosomal_S6_plastid/chlpt"/>
</dbReference>
<dbReference type="InterPro" id="IPR014717">
    <property type="entry name" value="Transl_elong_EF1B/ribsomal_bS6"/>
</dbReference>
<dbReference type="NCBIfam" id="TIGR00166">
    <property type="entry name" value="S6"/>
    <property type="match status" value="1"/>
</dbReference>
<dbReference type="PANTHER" id="PTHR21011">
    <property type="entry name" value="MITOCHONDRIAL 28S RIBOSOMAL PROTEIN S6"/>
    <property type="match status" value="1"/>
</dbReference>
<dbReference type="PANTHER" id="PTHR21011:SF1">
    <property type="entry name" value="SMALL RIBOSOMAL SUBUNIT PROTEIN BS6M"/>
    <property type="match status" value="1"/>
</dbReference>
<dbReference type="Pfam" id="PF01250">
    <property type="entry name" value="Ribosomal_S6"/>
    <property type="match status" value="1"/>
</dbReference>
<dbReference type="SUPFAM" id="SSF54995">
    <property type="entry name" value="Ribosomal protein S6"/>
    <property type="match status" value="1"/>
</dbReference>
<dbReference type="PROSITE" id="PS01048">
    <property type="entry name" value="RIBOSOMAL_S6"/>
    <property type="match status" value="1"/>
</dbReference>
<reference key="1">
    <citation type="journal article" date="2007" name="BMC Microbiol.">
        <title>Subtle genetic changes enhance virulence of methicillin resistant and sensitive Staphylococcus aureus.</title>
        <authorList>
            <person name="Highlander S.K."/>
            <person name="Hulten K.G."/>
            <person name="Qin X."/>
            <person name="Jiang H."/>
            <person name="Yerrapragada S."/>
            <person name="Mason E.O. Jr."/>
            <person name="Shang Y."/>
            <person name="Williams T.M."/>
            <person name="Fortunov R.M."/>
            <person name="Liu Y."/>
            <person name="Igboeli O."/>
            <person name="Petrosino J."/>
            <person name="Tirumalai M."/>
            <person name="Uzman A."/>
            <person name="Fox G.E."/>
            <person name="Cardenas A.M."/>
            <person name="Muzny D.M."/>
            <person name="Hemphill L."/>
            <person name="Ding Y."/>
            <person name="Dugan S."/>
            <person name="Blyth P.R."/>
            <person name="Buhay C.J."/>
            <person name="Dinh H.H."/>
            <person name="Hawes A.C."/>
            <person name="Holder M."/>
            <person name="Kovar C.L."/>
            <person name="Lee S.L."/>
            <person name="Liu W."/>
            <person name="Nazareth L.V."/>
            <person name="Wang Q."/>
            <person name="Zhou J."/>
            <person name="Kaplan S.L."/>
            <person name="Weinstock G.M."/>
        </authorList>
    </citation>
    <scope>NUCLEOTIDE SEQUENCE [LARGE SCALE GENOMIC DNA]</scope>
    <source>
        <strain>USA300 / TCH1516</strain>
    </source>
</reference>
<comment type="function">
    <text evidence="1">Binds together with bS18 to 16S ribosomal RNA.</text>
</comment>
<comment type="similarity">
    <text evidence="1">Belongs to the bacterial ribosomal protein bS6 family.</text>
</comment>
<evidence type="ECO:0000255" key="1">
    <source>
        <dbReference type="HAMAP-Rule" id="MF_00360"/>
    </source>
</evidence>
<evidence type="ECO:0000305" key="2"/>
<accession>A8YZJ1</accession>
<keyword id="KW-0687">Ribonucleoprotein</keyword>
<keyword id="KW-0689">Ribosomal protein</keyword>
<keyword id="KW-0694">RNA-binding</keyword>
<keyword id="KW-0699">rRNA-binding</keyword>
<proteinExistence type="inferred from homology"/>